<proteinExistence type="inferred from homology"/>
<sequence length="163" mass="18413">MPSFDIVSEVDLQEARNAVDNASREVESRFDFRNVEASFELNDARKTIKVLSESDFQVNQLLDILRAKLLKRGIEGSSLDVPENIVHSGKTWFVEAKLKQGIESATQKKIVKMIKDSKLKVQAQIQGDEIRVTGKSRDDLQAVMAMVRGGDLGQPFQFKNFRD</sequence>
<keyword id="KW-0547">Nucleotide-binding</keyword>
<keyword id="KW-1185">Reference proteome</keyword>
<protein>
    <recommendedName>
        <fullName evidence="1">Nucleotide-binding protein YajQ</fullName>
    </recommendedName>
</protein>
<gene>
    <name evidence="1" type="primary">yajQ</name>
    <name type="ordered locus">SDY_0304</name>
</gene>
<organism>
    <name type="scientific">Shigella dysenteriae serotype 1 (strain Sd197)</name>
    <dbReference type="NCBI Taxonomy" id="300267"/>
    <lineage>
        <taxon>Bacteria</taxon>
        <taxon>Pseudomonadati</taxon>
        <taxon>Pseudomonadota</taxon>
        <taxon>Gammaproteobacteria</taxon>
        <taxon>Enterobacterales</taxon>
        <taxon>Enterobacteriaceae</taxon>
        <taxon>Shigella</taxon>
    </lineage>
</organism>
<evidence type="ECO:0000255" key="1">
    <source>
        <dbReference type="HAMAP-Rule" id="MF_00632"/>
    </source>
</evidence>
<evidence type="ECO:0000305" key="2"/>
<name>YAJQ_SHIDS</name>
<comment type="function">
    <text evidence="1">Nucleotide-binding protein.</text>
</comment>
<comment type="similarity">
    <text evidence="1">Belongs to the YajQ family.</text>
</comment>
<comment type="sequence caution" evidence="2">
    <conflict type="erroneous initiation">
        <sequence resource="EMBL-CDS" id="ABB60523"/>
    </conflict>
</comment>
<accession>Q32JI4</accession>
<feature type="chain" id="PRO_0000261977" description="Nucleotide-binding protein YajQ">
    <location>
        <begin position="1"/>
        <end position="163"/>
    </location>
</feature>
<dbReference type="EMBL" id="CP000034">
    <property type="protein sequence ID" value="ABB60523.1"/>
    <property type="status" value="ALT_INIT"/>
    <property type="molecule type" value="Genomic_DNA"/>
</dbReference>
<dbReference type="RefSeq" id="WP_001138898.1">
    <property type="nucleotide sequence ID" value="NC_007606.1"/>
</dbReference>
<dbReference type="RefSeq" id="YP_402012.2">
    <property type="nucleotide sequence ID" value="NC_007606.1"/>
</dbReference>
<dbReference type="SMR" id="Q32JI4"/>
<dbReference type="STRING" id="300267.SDY_0304"/>
<dbReference type="EnsemblBacteria" id="ABB60523">
    <property type="protein sequence ID" value="ABB60523"/>
    <property type="gene ID" value="SDY_0304"/>
</dbReference>
<dbReference type="KEGG" id="sdy:SDY_0304"/>
<dbReference type="PATRIC" id="fig|300267.13.peg.349"/>
<dbReference type="HOGENOM" id="CLU_099839_1_0_6"/>
<dbReference type="Proteomes" id="UP000002716">
    <property type="component" value="Chromosome"/>
</dbReference>
<dbReference type="GO" id="GO:0005829">
    <property type="term" value="C:cytosol"/>
    <property type="evidence" value="ECO:0007669"/>
    <property type="project" value="TreeGrafter"/>
</dbReference>
<dbReference type="GO" id="GO:0000166">
    <property type="term" value="F:nucleotide binding"/>
    <property type="evidence" value="ECO:0007669"/>
    <property type="project" value="TreeGrafter"/>
</dbReference>
<dbReference type="CDD" id="cd11740">
    <property type="entry name" value="YajQ_like"/>
    <property type="match status" value="1"/>
</dbReference>
<dbReference type="FunFam" id="3.30.70.860:FF:000001">
    <property type="entry name" value="UPF0234 protein YajQ"/>
    <property type="match status" value="1"/>
</dbReference>
<dbReference type="FunFam" id="3.30.70.990:FF:000001">
    <property type="entry name" value="UPF0234 protein YajQ"/>
    <property type="match status" value="1"/>
</dbReference>
<dbReference type="Gene3D" id="3.30.70.860">
    <property type="match status" value="1"/>
</dbReference>
<dbReference type="Gene3D" id="3.30.70.990">
    <property type="entry name" value="YajQ-like, domain 2"/>
    <property type="match status" value="1"/>
</dbReference>
<dbReference type="HAMAP" id="MF_00632">
    <property type="entry name" value="YajQ"/>
    <property type="match status" value="1"/>
</dbReference>
<dbReference type="InterPro" id="IPR007551">
    <property type="entry name" value="DUF520"/>
</dbReference>
<dbReference type="InterPro" id="IPR035571">
    <property type="entry name" value="UPF0234-like_C"/>
</dbReference>
<dbReference type="InterPro" id="IPR035570">
    <property type="entry name" value="UPF0234_N"/>
</dbReference>
<dbReference type="InterPro" id="IPR036183">
    <property type="entry name" value="YajQ-like_sf"/>
</dbReference>
<dbReference type="NCBIfam" id="NF003819">
    <property type="entry name" value="PRK05412.1"/>
    <property type="match status" value="1"/>
</dbReference>
<dbReference type="PANTHER" id="PTHR30476">
    <property type="entry name" value="UPF0234 PROTEIN YAJQ"/>
    <property type="match status" value="1"/>
</dbReference>
<dbReference type="PANTHER" id="PTHR30476:SF0">
    <property type="entry name" value="UPF0234 PROTEIN YAJQ"/>
    <property type="match status" value="1"/>
</dbReference>
<dbReference type="Pfam" id="PF04461">
    <property type="entry name" value="DUF520"/>
    <property type="match status" value="1"/>
</dbReference>
<dbReference type="SUPFAM" id="SSF89963">
    <property type="entry name" value="YajQ-like"/>
    <property type="match status" value="2"/>
</dbReference>
<reference key="1">
    <citation type="journal article" date="2005" name="Nucleic Acids Res.">
        <title>Genome dynamics and diversity of Shigella species, the etiologic agents of bacillary dysentery.</title>
        <authorList>
            <person name="Yang F."/>
            <person name="Yang J."/>
            <person name="Zhang X."/>
            <person name="Chen L."/>
            <person name="Jiang Y."/>
            <person name="Yan Y."/>
            <person name="Tang X."/>
            <person name="Wang J."/>
            <person name="Xiong Z."/>
            <person name="Dong J."/>
            <person name="Xue Y."/>
            <person name="Zhu Y."/>
            <person name="Xu X."/>
            <person name="Sun L."/>
            <person name="Chen S."/>
            <person name="Nie H."/>
            <person name="Peng J."/>
            <person name="Xu J."/>
            <person name="Wang Y."/>
            <person name="Yuan Z."/>
            <person name="Wen Y."/>
            <person name="Yao Z."/>
            <person name="Shen Y."/>
            <person name="Qiang B."/>
            <person name="Hou Y."/>
            <person name="Yu J."/>
            <person name="Jin Q."/>
        </authorList>
    </citation>
    <scope>NUCLEOTIDE SEQUENCE [LARGE SCALE GENOMIC DNA]</scope>
    <source>
        <strain>Sd197</strain>
    </source>
</reference>